<protein>
    <recommendedName>
        <fullName evidence="1">Photosystem I assembly protein Ycf3</fullName>
    </recommendedName>
</protein>
<organism>
    <name type="scientific">Pleurastrum terricola</name>
    <name type="common">Filamentous green alga</name>
    <name type="synonym">Leptosira terrestris</name>
    <dbReference type="NCBI Taxonomy" id="34116"/>
    <lineage>
        <taxon>Eukaryota</taxon>
        <taxon>Viridiplantae</taxon>
        <taxon>Chlorophyta</taxon>
        <taxon>core chlorophytes</taxon>
        <taxon>Chlorophyceae</taxon>
        <taxon>CS clade</taxon>
        <taxon>Chlamydomonadales</taxon>
        <taxon>Pleurastraceae</taxon>
        <taxon>Pleurastrum</taxon>
    </lineage>
</organism>
<name>YCF3_PLETE</name>
<reference key="1">
    <citation type="journal article" date="2007" name="BMC Genomics">
        <title>The chloroplast genome sequence of the green alga Leptosira terrestris: multiple losses of the inverted repeat and extensive genome rearrangements within the Trebouxiophyceae.</title>
        <authorList>
            <person name="de Cambiaire J.-C."/>
            <person name="Otis C."/>
            <person name="Turmel M."/>
            <person name="Lemieux C."/>
        </authorList>
    </citation>
    <scope>NUCLEOTIDE SEQUENCE [LARGE SCALE GENOMIC DNA]</scope>
    <source>
        <strain>CCAP 463/2 / UTEX 333</strain>
    </source>
</reference>
<evidence type="ECO:0000255" key="1">
    <source>
        <dbReference type="HAMAP-Rule" id="MF_00439"/>
    </source>
</evidence>
<dbReference type="EMBL" id="EF506945">
    <property type="protein sequence ID" value="ABO69282.1"/>
    <property type="molecule type" value="Genomic_DNA"/>
</dbReference>
<dbReference type="RefSeq" id="YP_001382137.1">
    <property type="nucleotide sequence ID" value="NC_009681.1"/>
</dbReference>
<dbReference type="SMR" id="A6YG60"/>
<dbReference type="GeneID" id="5383789"/>
<dbReference type="GO" id="GO:0009535">
    <property type="term" value="C:chloroplast thylakoid membrane"/>
    <property type="evidence" value="ECO:0007669"/>
    <property type="project" value="UniProtKB-SubCell"/>
</dbReference>
<dbReference type="GO" id="GO:0015979">
    <property type="term" value="P:photosynthesis"/>
    <property type="evidence" value="ECO:0007669"/>
    <property type="project" value="UniProtKB-UniRule"/>
</dbReference>
<dbReference type="Gene3D" id="1.25.40.10">
    <property type="entry name" value="Tetratricopeptide repeat domain"/>
    <property type="match status" value="1"/>
</dbReference>
<dbReference type="HAMAP" id="MF_00439">
    <property type="entry name" value="Ycf3"/>
    <property type="match status" value="1"/>
</dbReference>
<dbReference type="InterPro" id="IPR022818">
    <property type="entry name" value="PSI_Ycf3_assembly"/>
</dbReference>
<dbReference type="InterPro" id="IPR011990">
    <property type="entry name" value="TPR-like_helical_dom_sf"/>
</dbReference>
<dbReference type="InterPro" id="IPR019734">
    <property type="entry name" value="TPR_rpt"/>
</dbReference>
<dbReference type="NCBIfam" id="NF002725">
    <property type="entry name" value="PRK02603.1"/>
    <property type="match status" value="1"/>
</dbReference>
<dbReference type="Pfam" id="PF00515">
    <property type="entry name" value="TPR_1"/>
    <property type="match status" value="1"/>
</dbReference>
<dbReference type="SMART" id="SM00028">
    <property type="entry name" value="TPR"/>
    <property type="match status" value="3"/>
</dbReference>
<dbReference type="SUPFAM" id="SSF48452">
    <property type="entry name" value="TPR-like"/>
    <property type="match status" value="1"/>
</dbReference>
<dbReference type="PROSITE" id="PS50005">
    <property type="entry name" value="TPR"/>
    <property type="match status" value="3"/>
</dbReference>
<dbReference type="PROSITE" id="PS50293">
    <property type="entry name" value="TPR_REGION"/>
    <property type="match status" value="1"/>
</dbReference>
<feature type="chain" id="PRO_0000325067" description="Photosystem I assembly protein Ycf3">
    <location>
        <begin position="1"/>
        <end position="167"/>
    </location>
</feature>
<feature type="repeat" description="TPR 1">
    <location>
        <begin position="35"/>
        <end position="68"/>
    </location>
</feature>
<feature type="repeat" description="TPR 2">
    <location>
        <begin position="72"/>
        <end position="105"/>
    </location>
</feature>
<feature type="repeat" description="TPR 3">
    <location>
        <begin position="120"/>
        <end position="153"/>
    </location>
</feature>
<comment type="function">
    <text evidence="1">Essential for the assembly of the photosystem I (PSI) complex. May act as a chaperone-like factor to guide the assembly of the PSI subunits.</text>
</comment>
<comment type="subcellular location">
    <subcellularLocation>
        <location evidence="1">Plastid</location>
        <location evidence="1">Chloroplast thylakoid membrane</location>
        <topology evidence="1">Peripheral membrane protein</topology>
    </subcellularLocation>
</comment>
<comment type="similarity">
    <text evidence="1">Belongs to the Ycf3 family.</text>
</comment>
<accession>A6YG60</accession>
<keyword id="KW-0150">Chloroplast</keyword>
<keyword id="KW-0472">Membrane</keyword>
<keyword id="KW-0602">Photosynthesis</keyword>
<keyword id="KW-0934">Plastid</keyword>
<keyword id="KW-0677">Repeat</keyword>
<keyword id="KW-0793">Thylakoid</keyword>
<keyword id="KW-0802">TPR repeat</keyword>
<sequence>MPRSQRNDNFIDKTFTVIADILLKVLPTSNREKQAFTYYREGMSAQSEGEYAEALQNYYEAMRLEVDAYDRSYIFYNIGLIHTSNGEHARALEYYYQALERNPSLPQALNNIAVIYHYRGEQAIENGQAEISKMLFDKAADYWKEAIRLAPTNYIEAQNWLKMTARE</sequence>
<proteinExistence type="inferred from homology"/>
<geneLocation type="chloroplast"/>
<gene>
    <name evidence="1" type="primary">ycf3</name>
</gene>